<reference evidence="4" key="1">
    <citation type="journal article" date="2004" name="Rapid Commun. Mass Spectrom.">
        <title>Host-defence skin peptides of the Australian common froglet Crinia signifera: sequence determination using positive and negative ion electrospray mass spectra.</title>
        <authorList>
            <person name="Maselli V.M."/>
            <person name="Brinkworth C.S."/>
            <person name="Bowie J.H."/>
            <person name="Tyler M.J."/>
        </authorList>
    </citation>
    <scope>PROTEIN SEQUENCE</scope>
    <scope>SUBCELLULAR LOCATION</scope>
    <scope>TISSUE SPECIFICITY</scope>
    <scope>AMIDATION AT LEU-15</scope>
    <source>
        <tissue evidence="1">Skin secretion</tissue>
    </source>
</reference>
<reference evidence="4" key="2">
    <citation type="journal article" date="2006" name="Rapid Commun. Mass Spectrom.">
        <title>Host-defence skin peptides of the Australian streambank froglet Crinia riparia: isolation and sequence determination by positive and negative ion electrospray mass spectrometry.</title>
        <authorList>
            <person name="Maselli V.M."/>
            <person name="Bilusich D."/>
            <person name="Bowie J.H."/>
            <person name="Tyler M.J."/>
        </authorList>
    </citation>
    <scope>FUNCTION</scope>
</reference>
<reference evidence="4" key="3">
    <citation type="journal article" date="2008" name="Regul. Pept.">
        <title>Disulfide-containing peptides from the glandular skin secretions of froglets of the genus Crinia: structure, activity and evolutionary trends.</title>
        <authorList>
            <person name="Jackway R.J."/>
            <person name="Pukala T.L."/>
            <person name="Maselli V.M."/>
            <person name="Musgrave I.F."/>
            <person name="Bowie J.H."/>
            <person name="Liu Y."/>
            <person name="Surinya-Johnson K.H."/>
            <person name="Donnellan S.C."/>
            <person name="Doyle J.R."/>
            <person name="Llewellyn L.E."/>
            <person name="Tyler M.J."/>
        </authorList>
    </citation>
    <scope>FUNCTION</scope>
    <scope>DISCUSSION OF SEQUENCE</scope>
</reference>
<feature type="peptide" id="PRO_0000371741" description="Signiferin-2.2">
    <location>
        <begin position="1"/>
        <end position="15"/>
    </location>
</feature>
<feature type="modified residue" description="Leucine amide" evidence="1">
    <location>
        <position position="15"/>
    </location>
</feature>
<evidence type="ECO:0000269" key="1">
    <source>
    </source>
</evidence>
<evidence type="ECO:0000269" key="2">
    <source>
    </source>
</evidence>
<evidence type="ECO:0000269" key="3">
    <source>
    </source>
</evidence>
<evidence type="ECO:0000305" key="4"/>
<accession>P86132</accession>
<sequence length="15" mass="1566">IIGHLIKTALGFLGL</sequence>
<proteinExistence type="evidence at protein level"/>
<name>SIG22_CRISI</name>
<comment type="function">
    <text evidence="2 3">Has antibacterial activity against a wide spectrum of Gram-positive bacteria including B.cereus, E.faecalis, L.lactis, L.innocua, M.luteus, S.aureus, S.epidermidis and S.uberis. Lacks antibacterial activity against the Gram-negative bacteria E.cloacae and E.coli.</text>
</comment>
<comment type="subcellular location">
    <subcellularLocation>
        <location evidence="1">Secreted</location>
    </subcellularLocation>
</comment>
<comment type="tissue specificity">
    <text evidence="1">Expressed by the skin glands.</text>
</comment>
<organism>
    <name type="scientific">Crinia signifera</name>
    <name type="common">Common eastern froglet</name>
    <dbReference type="NCBI Taxonomy" id="326986"/>
    <lineage>
        <taxon>Eukaryota</taxon>
        <taxon>Metazoa</taxon>
        <taxon>Chordata</taxon>
        <taxon>Craniata</taxon>
        <taxon>Vertebrata</taxon>
        <taxon>Euteleostomi</taxon>
        <taxon>Amphibia</taxon>
        <taxon>Batrachia</taxon>
        <taxon>Anura</taxon>
        <taxon>Neobatrachia</taxon>
        <taxon>Myobatrachoidea</taxon>
        <taxon>Myobatrachidae</taxon>
        <taxon>Myobatrachinae</taxon>
        <taxon>Crinia</taxon>
    </lineage>
</organism>
<protein>
    <recommendedName>
        <fullName>Signiferin-2.2</fullName>
    </recommendedName>
</protein>
<dbReference type="GO" id="GO:0005576">
    <property type="term" value="C:extracellular region"/>
    <property type="evidence" value="ECO:0000314"/>
    <property type="project" value="UniProtKB"/>
</dbReference>
<dbReference type="GO" id="GO:0050830">
    <property type="term" value="P:defense response to Gram-positive bacterium"/>
    <property type="evidence" value="ECO:0000314"/>
    <property type="project" value="UniProtKB"/>
</dbReference>
<keyword id="KW-0027">Amidation</keyword>
<keyword id="KW-0878">Amphibian defense peptide</keyword>
<keyword id="KW-0044">Antibiotic</keyword>
<keyword id="KW-0929">Antimicrobial</keyword>
<keyword id="KW-0903">Direct protein sequencing</keyword>
<keyword id="KW-0964">Secreted</keyword>